<feature type="signal peptide" evidence="3">
    <location>
        <begin position="1"/>
        <end position="37"/>
    </location>
</feature>
<feature type="chain" id="PRO_0000024704" description="Glycerol-3-phosphate acyltransferase 4">
    <location>
        <begin position="38"/>
        <end position="456"/>
    </location>
</feature>
<feature type="transmembrane region" description="Helical" evidence="3">
    <location>
        <begin position="156"/>
        <end position="176"/>
    </location>
</feature>
<feature type="transmembrane region" description="Helical" evidence="3">
    <location>
        <begin position="180"/>
        <end position="200"/>
    </location>
</feature>
<feature type="short sequence motif" description="HXXXXD motif" evidence="2">
    <location>
        <begin position="248"/>
        <end position="253"/>
    </location>
</feature>
<feature type="glycosylation site" description="N-linked (GlcNAc...) asparagine" evidence="3">
    <location>
        <position position="247"/>
    </location>
</feature>
<feature type="glycosylation site" description="N-linked (GlcNAc...) asparagine" evidence="3">
    <location>
        <position position="327"/>
    </location>
</feature>
<feature type="glycosylation site" description="N-linked (GlcNAc...) asparagine" evidence="3">
    <location>
        <position position="328"/>
    </location>
</feature>
<feature type="glycosylation site" description="N-linked (GlcNAc...) asparagine" evidence="3">
    <location>
        <position position="362"/>
    </location>
</feature>
<feature type="sequence conflict" description="In Ref. 4; AAS75838." evidence="7" ref="4">
    <original>C</original>
    <variation>G</variation>
    <location>
        <position position="119"/>
    </location>
</feature>
<protein>
    <recommendedName>
        <fullName evidence="9">Glycerol-3-phosphate acyltransferase 4</fullName>
        <shortName>GPAT4</shortName>
        <ecNumber evidence="5">2.3.1.15</ecNumber>
    </recommendedName>
    <alternativeName>
        <fullName>1-acylglycerol-3-phosphate O-acyltransferase 6</fullName>
        <shortName>1-AGP acyltransferase 6</shortName>
        <shortName>1-AGPAT 6</shortName>
    </alternativeName>
    <alternativeName>
        <fullName>Acyl-CoA:glycerol-3-phosphate acyltransferase 4</fullName>
    </alternativeName>
    <alternativeName>
        <fullName>Lysophosphatidic acid acyltransferase zeta</fullName>
        <shortName>LPAAT-zeta</shortName>
    </alternativeName>
    <alternativeName>
        <fullName evidence="6">Testis spermatogenesis apoptosis-related protein 7</fullName>
    </alternativeName>
</protein>
<reference key="1">
    <citation type="submission" date="2001-08" db="EMBL/GenBank/DDBJ databases">
        <title>A novel gene encodes a product of putative lysophosphatidic acid acyltransferase.</title>
        <authorList>
            <person name="Guo J.H."/>
            <person name="Dai F.Y."/>
            <person name="Yu L."/>
        </authorList>
    </citation>
    <scope>NUCLEOTIDE SEQUENCE [LARGE SCALE MRNA]</scope>
    <source>
        <strain>Czech II</strain>
    </source>
</reference>
<reference key="2">
    <citation type="journal article" date="2005" name="Science">
        <title>The transcriptional landscape of the mammalian genome.</title>
        <authorList>
            <person name="Carninci P."/>
            <person name="Kasukawa T."/>
            <person name="Katayama S."/>
            <person name="Gough J."/>
            <person name="Frith M.C."/>
            <person name="Maeda N."/>
            <person name="Oyama R."/>
            <person name="Ravasi T."/>
            <person name="Lenhard B."/>
            <person name="Wells C."/>
            <person name="Kodzius R."/>
            <person name="Shimokawa K."/>
            <person name="Bajic V.B."/>
            <person name="Brenner S.E."/>
            <person name="Batalov S."/>
            <person name="Forrest A.R."/>
            <person name="Zavolan M."/>
            <person name="Davis M.J."/>
            <person name="Wilming L.G."/>
            <person name="Aidinis V."/>
            <person name="Allen J.E."/>
            <person name="Ambesi-Impiombato A."/>
            <person name="Apweiler R."/>
            <person name="Aturaliya R.N."/>
            <person name="Bailey T.L."/>
            <person name="Bansal M."/>
            <person name="Baxter L."/>
            <person name="Beisel K.W."/>
            <person name="Bersano T."/>
            <person name="Bono H."/>
            <person name="Chalk A.M."/>
            <person name="Chiu K.P."/>
            <person name="Choudhary V."/>
            <person name="Christoffels A."/>
            <person name="Clutterbuck D.R."/>
            <person name="Crowe M.L."/>
            <person name="Dalla E."/>
            <person name="Dalrymple B.P."/>
            <person name="de Bono B."/>
            <person name="Della Gatta G."/>
            <person name="di Bernardo D."/>
            <person name="Down T."/>
            <person name="Engstrom P."/>
            <person name="Fagiolini M."/>
            <person name="Faulkner G."/>
            <person name="Fletcher C.F."/>
            <person name="Fukushima T."/>
            <person name="Furuno M."/>
            <person name="Futaki S."/>
            <person name="Gariboldi M."/>
            <person name="Georgii-Hemming P."/>
            <person name="Gingeras T.R."/>
            <person name="Gojobori T."/>
            <person name="Green R.E."/>
            <person name="Gustincich S."/>
            <person name="Harbers M."/>
            <person name="Hayashi Y."/>
            <person name="Hensch T.K."/>
            <person name="Hirokawa N."/>
            <person name="Hill D."/>
            <person name="Huminiecki L."/>
            <person name="Iacono M."/>
            <person name="Ikeo K."/>
            <person name="Iwama A."/>
            <person name="Ishikawa T."/>
            <person name="Jakt M."/>
            <person name="Kanapin A."/>
            <person name="Katoh M."/>
            <person name="Kawasawa Y."/>
            <person name="Kelso J."/>
            <person name="Kitamura H."/>
            <person name="Kitano H."/>
            <person name="Kollias G."/>
            <person name="Krishnan S.P."/>
            <person name="Kruger A."/>
            <person name="Kummerfeld S.K."/>
            <person name="Kurochkin I.V."/>
            <person name="Lareau L.F."/>
            <person name="Lazarevic D."/>
            <person name="Lipovich L."/>
            <person name="Liu J."/>
            <person name="Liuni S."/>
            <person name="McWilliam S."/>
            <person name="Madan Babu M."/>
            <person name="Madera M."/>
            <person name="Marchionni L."/>
            <person name="Matsuda H."/>
            <person name="Matsuzawa S."/>
            <person name="Miki H."/>
            <person name="Mignone F."/>
            <person name="Miyake S."/>
            <person name="Morris K."/>
            <person name="Mottagui-Tabar S."/>
            <person name="Mulder N."/>
            <person name="Nakano N."/>
            <person name="Nakauchi H."/>
            <person name="Ng P."/>
            <person name="Nilsson R."/>
            <person name="Nishiguchi S."/>
            <person name="Nishikawa S."/>
            <person name="Nori F."/>
            <person name="Ohara O."/>
            <person name="Okazaki Y."/>
            <person name="Orlando V."/>
            <person name="Pang K.C."/>
            <person name="Pavan W.J."/>
            <person name="Pavesi G."/>
            <person name="Pesole G."/>
            <person name="Petrovsky N."/>
            <person name="Piazza S."/>
            <person name="Reed J."/>
            <person name="Reid J.F."/>
            <person name="Ring B.Z."/>
            <person name="Ringwald M."/>
            <person name="Rost B."/>
            <person name="Ruan Y."/>
            <person name="Salzberg S.L."/>
            <person name="Sandelin A."/>
            <person name="Schneider C."/>
            <person name="Schoenbach C."/>
            <person name="Sekiguchi K."/>
            <person name="Semple C.A."/>
            <person name="Seno S."/>
            <person name="Sessa L."/>
            <person name="Sheng Y."/>
            <person name="Shibata Y."/>
            <person name="Shimada H."/>
            <person name="Shimada K."/>
            <person name="Silva D."/>
            <person name="Sinclair B."/>
            <person name="Sperling S."/>
            <person name="Stupka E."/>
            <person name="Sugiura K."/>
            <person name="Sultana R."/>
            <person name="Takenaka Y."/>
            <person name="Taki K."/>
            <person name="Tammoja K."/>
            <person name="Tan S.L."/>
            <person name="Tang S."/>
            <person name="Taylor M.S."/>
            <person name="Tegner J."/>
            <person name="Teichmann S.A."/>
            <person name="Ueda H.R."/>
            <person name="van Nimwegen E."/>
            <person name="Verardo R."/>
            <person name="Wei C.L."/>
            <person name="Yagi K."/>
            <person name="Yamanishi H."/>
            <person name="Zabarovsky E."/>
            <person name="Zhu S."/>
            <person name="Zimmer A."/>
            <person name="Hide W."/>
            <person name="Bult C."/>
            <person name="Grimmond S.M."/>
            <person name="Teasdale R.D."/>
            <person name="Liu E.T."/>
            <person name="Brusic V."/>
            <person name="Quackenbush J."/>
            <person name="Wahlestedt C."/>
            <person name="Mattick J.S."/>
            <person name="Hume D.A."/>
            <person name="Kai C."/>
            <person name="Sasaki D."/>
            <person name="Tomaru Y."/>
            <person name="Fukuda S."/>
            <person name="Kanamori-Katayama M."/>
            <person name="Suzuki M."/>
            <person name="Aoki J."/>
            <person name="Arakawa T."/>
            <person name="Iida J."/>
            <person name="Imamura K."/>
            <person name="Itoh M."/>
            <person name="Kato T."/>
            <person name="Kawaji H."/>
            <person name="Kawagashira N."/>
            <person name="Kawashima T."/>
            <person name="Kojima M."/>
            <person name="Kondo S."/>
            <person name="Konno H."/>
            <person name="Nakano K."/>
            <person name="Ninomiya N."/>
            <person name="Nishio T."/>
            <person name="Okada M."/>
            <person name="Plessy C."/>
            <person name="Shibata K."/>
            <person name="Shiraki T."/>
            <person name="Suzuki S."/>
            <person name="Tagami M."/>
            <person name="Waki K."/>
            <person name="Watahiki A."/>
            <person name="Okamura-Oho Y."/>
            <person name="Suzuki H."/>
            <person name="Kawai J."/>
            <person name="Hayashizaki Y."/>
        </authorList>
    </citation>
    <scope>NUCLEOTIDE SEQUENCE [LARGE SCALE MRNA]</scope>
    <source>
        <strain>C57BL/6J</strain>
        <tissue>Heart</tissue>
        <tissue>Testis</tissue>
    </source>
</reference>
<reference key="3">
    <citation type="journal article" date="2004" name="Genome Res.">
        <title>The status, quality, and expansion of the NIH full-length cDNA project: the Mammalian Gene Collection (MGC).</title>
        <authorList>
            <consortium name="The MGC Project Team"/>
        </authorList>
    </citation>
    <scope>NUCLEOTIDE SEQUENCE [LARGE SCALE MRNA]</scope>
    <source>
        <strain>FVB/N</strain>
        <tissue>Mammary tumor</tissue>
    </source>
</reference>
<reference key="4">
    <citation type="journal article" date="2005" name="Acta Biochim. Biophys. Sin.">
        <title>Molecular cloning of a novel mouse testis-specific spermatogenic cell apoptosis inhibitor gene mTSARG7 as a candidate oncogene.</title>
        <authorList>
            <person name="Tan X.J."/>
            <person name="Xing X.W."/>
            <person name="Li L.Y."/>
            <person name="Wu Z.D."/>
            <person name="Zhong C.G."/>
            <person name="Nie D.S."/>
            <person name="Fu J.J."/>
            <person name="Xiang Y."/>
            <person name="Deng Y."/>
            <person name="Lu G.X."/>
        </authorList>
    </citation>
    <scope>NUCLEOTIDE SEQUENCE [MRNA] OF 1-402</scope>
    <scope>TISSUE SPECIFICITY</scope>
    <source>
        <strain>BALB/cJ</strain>
    </source>
</reference>
<reference key="5">
    <citation type="journal article" date="2008" name="J. Biol. Chem.">
        <title>AGPAT6 is a novel microsomal glycerol-3-phosphate acyltransferase.</title>
        <authorList>
            <person name="Chen Y.Q."/>
            <person name="Kuo M.-S."/>
            <person name="Li S."/>
            <person name="Bui H.H."/>
            <person name="Peake D.A."/>
            <person name="Sanders P.E."/>
            <person name="Thibodeaux S.J."/>
            <person name="Chu S."/>
            <person name="Qian Y.-W."/>
            <person name="Zhao Y."/>
            <person name="Bredt D.S."/>
            <person name="Moller D.E."/>
            <person name="Konrad R.J."/>
            <person name="Beigneux A.P."/>
            <person name="Young S.G."/>
            <person name="Cao G."/>
        </authorList>
    </citation>
    <scope>FUNCTION</scope>
    <scope>CATALYTIC ACTIVITY</scope>
</reference>
<reference key="6">
    <citation type="journal article" date="2010" name="Cell">
        <title>A tissue-specific atlas of mouse protein phosphorylation and expression.</title>
        <authorList>
            <person name="Huttlin E.L."/>
            <person name="Jedrychowski M.P."/>
            <person name="Elias J.E."/>
            <person name="Goswami T."/>
            <person name="Rad R."/>
            <person name="Beausoleil S.A."/>
            <person name="Villen J."/>
            <person name="Haas W."/>
            <person name="Sowa M.E."/>
            <person name="Gygi S.P."/>
        </authorList>
    </citation>
    <scope>IDENTIFICATION BY MASS SPECTROMETRY [LARGE SCALE ANALYSIS]</scope>
    <source>
        <tissue>Pancreas</tissue>
    </source>
</reference>
<keyword id="KW-0012">Acyltransferase</keyword>
<keyword id="KW-0256">Endoplasmic reticulum</keyword>
<keyword id="KW-0325">Glycoprotein</keyword>
<keyword id="KW-0444">Lipid biosynthesis</keyword>
<keyword id="KW-0443">Lipid metabolism</keyword>
<keyword id="KW-0472">Membrane</keyword>
<keyword id="KW-0594">Phospholipid biosynthesis</keyword>
<keyword id="KW-1208">Phospholipid metabolism</keyword>
<keyword id="KW-1185">Reference proteome</keyword>
<keyword id="KW-0732">Signal</keyword>
<keyword id="KW-0808">Transferase</keyword>
<keyword id="KW-0812">Transmembrane</keyword>
<keyword id="KW-1133">Transmembrane helix</keyword>
<gene>
    <name evidence="9" type="primary">Gpat4</name>
    <name type="synonym">Agpat6</name>
    <name evidence="6" type="synonym">Tsarg7</name>
</gene>
<comment type="function">
    <text evidence="1 5">Converts glycerol-3-phosphate to 1-acyl-sn-glycerol-3-phosphate (lysophosphatidic acid or LPA) by incorporating an acyl moiety at the sn-1 position of the glycerol backbone (PubMed:18238778). Active against both saturated and unsaturated long-chain fatty acyl-CoAs (By similarity). Protects cells against lipotoxicity (By similarity).</text>
</comment>
<comment type="catalytic activity">
    <reaction evidence="5">
        <text>sn-glycerol 3-phosphate + an acyl-CoA = a 1-acyl-sn-glycero-3-phosphate + CoA</text>
        <dbReference type="Rhea" id="RHEA:15325"/>
        <dbReference type="ChEBI" id="CHEBI:57287"/>
        <dbReference type="ChEBI" id="CHEBI:57597"/>
        <dbReference type="ChEBI" id="CHEBI:57970"/>
        <dbReference type="ChEBI" id="CHEBI:58342"/>
        <dbReference type="EC" id="2.3.1.15"/>
    </reaction>
    <physiologicalReaction direction="left-to-right" evidence="8">
        <dbReference type="Rhea" id="RHEA:15326"/>
    </physiologicalReaction>
</comment>
<comment type="catalytic activity">
    <reaction evidence="1">
        <text>dodecanoyl-CoA + sn-glycerol 3-phosphate = 1-dodecanoyl-sn-glycerol 3-phosphate + CoA</text>
        <dbReference type="Rhea" id="RHEA:35727"/>
        <dbReference type="ChEBI" id="CHEBI:57287"/>
        <dbReference type="ChEBI" id="CHEBI:57375"/>
        <dbReference type="ChEBI" id="CHEBI:57597"/>
        <dbReference type="ChEBI" id="CHEBI:72682"/>
    </reaction>
    <physiologicalReaction direction="left-to-right" evidence="1">
        <dbReference type="Rhea" id="RHEA:35728"/>
    </physiologicalReaction>
</comment>
<comment type="catalytic activity">
    <reaction evidence="5">
        <text>sn-glycerol 3-phosphate + hexadecanoyl-CoA = 1-hexadecanoyl-sn-glycero-3-phosphate + CoA</text>
        <dbReference type="Rhea" id="RHEA:35723"/>
        <dbReference type="ChEBI" id="CHEBI:57287"/>
        <dbReference type="ChEBI" id="CHEBI:57379"/>
        <dbReference type="ChEBI" id="CHEBI:57518"/>
        <dbReference type="ChEBI" id="CHEBI:57597"/>
    </reaction>
    <physiologicalReaction direction="left-to-right" evidence="8">
        <dbReference type="Rhea" id="RHEA:35724"/>
    </physiologicalReaction>
</comment>
<comment type="catalytic activity">
    <reaction evidence="1">
        <text>sn-glycerol 3-phosphate + octadecanoyl-CoA = 1-octadecanoyl-sn-glycero-3-phosphate + CoA</text>
        <dbReference type="Rhea" id="RHEA:37195"/>
        <dbReference type="ChEBI" id="CHEBI:57287"/>
        <dbReference type="ChEBI" id="CHEBI:57394"/>
        <dbReference type="ChEBI" id="CHEBI:57597"/>
        <dbReference type="ChEBI" id="CHEBI:74565"/>
    </reaction>
    <physiologicalReaction direction="left-to-right" evidence="1">
        <dbReference type="Rhea" id="RHEA:37196"/>
    </physiologicalReaction>
</comment>
<comment type="catalytic activity">
    <reaction evidence="1">
        <text>sn-glycerol 3-phosphate + (9Z)-octadecenoyl-CoA = 1-(9Z-octadecenoyl)-sn-glycero-3-phosphate + CoA</text>
        <dbReference type="Rhea" id="RHEA:37199"/>
        <dbReference type="ChEBI" id="CHEBI:57287"/>
        <dbReference type="ChEBI" id="CHEBI:57387"/>
        <dbReference type="ChEBI" id="CHEBI:57597"/>
        <dbReference type="ChEBI" id="CHEBI:74544"/>
    </reaction>
    <physiologicalReaction direction="left-to-right" evidence="1">
        <dbReference type="Rhea" id="RHEA:37200"/>
    </physiologicalReaction>
</comment>
<comment type="catalytic activity">
    <reaction evidence="1">
        <text>(9Z,12Z)-octadecadienoyl-CoA + sn-glycerol 3-phosphate = 1-(9Z,12Z)-octadecadienoyl-sn-glycero-3-phosphate + CoA</text>
        <dbReference type="Rhea" id="RHEA:37203"/>
        <dbReference type="ChEBI" id="CHEBI:57287"/>
        <dbReference type="ChEBI" id="CHEBI:57383"/>
        <dbReference type="ChEBI" id="CHEBI:57597"/>
        <dbReference type="ChEBI" id="CHEBI:74547"/>
    </reaction>
    <physiologicalReaction direction="left-to-right" evidence="1">
        <dbReference type="Rhea" id="RHEA:37204"/>
    </physiologicalReaction>
</comment>
<comment type="pathway">
    <text>Phospholipid metabolism; CDP-diacylglycerol biosynthesis; CDP-diacylglycerol from sn-glycerol 3-phosphate: step 1/3.</text>
</comment>
<comment type="subcellular location">
    <subcellularLocation>
        <location evidence="1">Endoplasmic reticulum membrane</location>
        <topology evidence="3">Multi-pass membrane protein</topology>
    </subcellularLocation>
</comment>
<comment type="tissue specificity">
    <text evidence="4">Highly expressed in testis.</text>
</comment>
<comment type="domain">
    <text evidence="2">The HXXXXD motif is essential for acyltransferase activity and may constitute the binding site for the phosphate moiety of the glycerol-3-phosphate.</text>
</comment>
<comment type="similarity">
    <text evidence="7">Belongs to the 1-acyl-sn-glycerol-3-phosphate acyltransferase family.</text>
</comment>
<sequence>MFLLLPFDSLIVNLLGISLTVLFTLLLVFIIVPAIFGVSFGIRKLYMKTLLKIFAWATLRMERGAKERNHQLYKPYTNGIIAKDPTSLEEEIKEIRRSGSSKALDKTPEFELSDIFYFCRKGMETIMDDEVTKRFSAEELESWNLLSRTNYNFQYISLRLTILWGLGVLIRYCFLLPLRIALAFTGIGLLVVGTTMVGYLPNGRFKEFLSKHVHLMCYRICVRALTAIITYHNRKNRPRNGGICVANHTSPIDVIILASDGYYAMVGQVHGGLMGVIQRAMVKACPHVWFERSEVKDRHLVAKRLTEHVQDKSKLPILIFPEGTCINNTSVMMFKKGSFEIGATVYPVAIKYDPQFGDAFWNSSKYGMVTYLLRMMTSWAIVCSVWYLPPMTREKDEDAVQFANRVKSAIARQGGLVDLLWDGGLKREKVKDTFKEEQQKLYSKMIVGNHEDRSRS</sequence>
<proteinExistence type="evidence at protein level"/>
<accession>Q8K2C8</accession>
<accession>Q3TF78</accession>
<accession>Q5QHR4</accession>
<name>GPAT4_MOUSE</name>
<dbReference type="EC" id="2.3.1.15" evidence="5"/>
<dbReference type="EMBL" id="AY489184">
    <property type="protein sequence ID" value="AAS75838.1"/>
    <property type="molecule type" value="mRNA"/>
</dbReference>
<dbReference type="EMBL" id="AF406611">
    <property type="protein sequence ID" value="AAP97283.1"/>
    <property type="molecule type" value="mRNA"/>
</dbReference>
<dbReference type="EMBL" id="AK045235">
    <property type="protein sequence ID" value="BAC32273.1"/>
    <property type="molecule type" value="mRNA"/>
</dbReference>
<dbReference type="EMBL" id="AK077561">
    <property type="protein sequence ID" value="BAC36864.1"/>
    <property type="molecule type" value="mRNA"/>
</dbReference>
<dbReference type="EMBL" id="AK083589">
    <property type="protein sequence ID" value="BAC38962.1"/>
    <property type="molecule type" value="mRNA"/>
</dbReference>
<dbReference type="EMBL" id="AK161270">
    <property type="protein sequence ID" value="BAE36282.1"/>
    <property type="molecule type" value="mRNA"/>
</dbReference>
<dbReference type="EMBL" id="AK169257">
    <property type="protein sequence ID" value="BAE41020.1"/>
    <property type="molecule type" value="mRNA"/>
</dbReference>
<dbReference type="EMBL" id="BC031767">
    <property type="protein sequence ID" value="AAH31767.1"/>
    <property type="molecule type" value="mRNA"/>
</dbReference>
<dbReference type="CCDS" id="CCDS22189.1"/>
<dbReference type="RefSeq" id="NP_061213.2">
    <property type="nucleotide sequence ID" value="NM_018743.4"/>
</dbReference>
<dbReference type="BioGRID" id="221833">
    <property type="interactions" value="2"/>
</dbReference>
<dbReference type="FunCoup" id="Q8K2C8">
    <property type="interactions" value="3375"/>
</dbReference>
<dbReference type="STRING" id="10090.ENSMUSP00000127325"/>
<dbReference type="SwissLipids" id="SLP:000000104"/>
<dbReference type="GlyCosmos" id="Q8K2C8">
    <property type="glycosylation" value="4 sites, No reported glycans"/>
</dbReference>
<dbReference type="GlyGen" id="Q8K2C8">
    <property type="glycosylation" value="4 sites"/>
</dbReference>
<dbReference type="iPTMnet" id="Q8K2C8"/>
<dbReference type="PhosphoSitePlus" id="Q8K2C8"/>
<dbReference type="SwissPalm" id="Q8K2C8"/>
<dbReference type="jPOST" id="Q8K2C8"/>
<dbReference type="PaxDb" id="10090-ENSMUSP00000127325"/>
<dbReference type="ProteomicsDB" id="271261"/>
<dbReference type="Pumba" id="Q8K2C8"/>
<dbReference type="Antibodypedia" id="3092">
    <property type="antibodies" value="279 antibodies from 23 providers"/>
</dbReference>
<dbReference type="DNASU" id="102247"/>
<dbReference type="Ensembl" id="ENSMUST00000167004.3">
    <property type="protein sequence ID" value="ENSMUSP00000127325.2"/>
    <property type="gene ID" value="ENSMUSG00000031545.7"/>
</dbReference>
<dbReference type="GeneID" id="102247"/>
<dbReference type="KEGG" id="mmu:102247"/>
<dbReference type="UCSC" id="uc009leo.2">
    <property type="organism name" value="mouse"/>
</dbReference>
<dbReference type="AGR" id="MGI:2142716"/>
<dbReference type="CTD" id="137964"/>
<dbReference type="MGI" id="MGI:2142716">
    <property type="gene designation" value="Gpat4"/>
</dbReference>
<dbReference type="VEuPathDB" id="HostDB:ENSMUSG00000031545"/>
<dbReference type="eggNOG" id="KOG2898">
    <property type="taxonomic scope" value="Eukaryota"/>
</dbReference>
<dbReference type="GeneTree" id="ENSGT01030000234574"/>
<dbReference type="HOGENOM" id="CLU_031080_0_1_1"/>
<dbReference type="InParanoid" id="Q8K2C8"/>
<dbReference type="OMA" id="ANHTTVM"/>
<dbReference type="OrthoDB" id="10051137at2759"/>
<dbReference type="PhylomeDB" id="Q8K2C8"/>
<dbReference type="TreeFam" id="TF315039"/>
<dbReference type="BRENDA" id="2.3.1.15">
    <property type="organism ID" value="3474"/>
</dbReference>
<dbReference type="Reactome" id="R-MMU-1483166">
    <property type="pathway name" value="Synthesis of PA"/>
</dbReference>
<dbReference type="UniPathway" id="UPA00557">
    <property type="reaction ID" value="UER00612"/>
</dbReference>
<dbReference type="BioGRID-ORCS" id="102247">
    <property type="hits" value="3 hits in 48 CRISPR screens"/>
</dbReference>
<dbReference type="ChiTaRS" id="Gpat4">
    <property type="organism name" value="mouse"/>
</dbReference>
<dbReference type="PRO" id="PR:Q8K2C8"/>
<dbReference type="Proteomes" id="UP000000589">
    <property type="component" value="Chromosome 8"/>
</dbReference>
<dbReference type="RNAct" id="Q8K2C8">
    <property type="molecule type" value="protein"/>
</dbReference>
<dbReference type="Bgee" id="ENSMUSG00000031545">
    <property type="expression patterns" value="Expressed in seminiferous tubule of testis and 245 other cell types or tissues"/>
</dbReference>
<dbReference type="ExpressionAtlas" id="Q8K2C8">
    <property type="expression patterns" value="baseline and differential"/>
</dbReference>
<dbReference type="GO" id="GO:0005783">
    <property type="term" value="C:endoplasmic reticulum"/>
    <property type="evidence" value="ECO:0000314"/>
    <property type="project" value="UniProtKB"/>
</dbReference>
<dbReference type="GO" id="GO:0005789">
    <property type="term" value="C:endoplasmic reticulum membrane"/>
    <property type="evidence" value="ECO:0000303"/>
    <property type="project" value="UniProtKB"/>
</dbReference>
<dbReference type="GO" id="GO:0004366">
    <property type="term" value="F:glycerol-3-phosphate O-acyltransferase activity"/>
    <property type="evidence" value="ECO:0000315"/>
    <property type="project" value="UniProtKB"/>
</dbReference>
<dbReference type="GO" id="GO:0006637">
    <property type="term" value="P:acyl-CoA metabolic process"/>
    <property type="evidence" value="ECO:0007669"/>
    <property type="project" value="Ensembl"/>
</dbReference>
<dbReference type="GO" id="GO:0016024">
    <property type="term" value="P:CDP-diacylglycerol biosynthetic process"/>
    <property type="evidence" value="ECO:0007669"/>
    <property type="project" value="UniProtKB-UniPathway"/>
</dbReference>
<dbReference type="GO" id="GO:0046339">
    <property type="term" value="P:diacylglycerol metabolic process"/>
    <property type="evidence" value="ECO:0000315"/>
    <property type="project" value="MGI"/>
</dbReference>
<dbReference type="GO" id="GO:0006631">
    <property type="term" value="P:fatty acid metabolic process"/>
    <property type="evidence" value="ECO:0000315"/>
    <property type="project" value="MGI"/>
</dbReference>
<dbReference type="GO" id="GO:0002071">
    <property type="term" value="P:glandular epithelial cell maturation"/>
    <property type="evidence" value="ECO:0000315"/>
    <property type="project" value="MGI"/>
</dbReference>
<dbReference type="GO" id="GO:0007595">
    <property type="term" value="P:lactation"/>
    <property type="evidence" value="ECO:0000315"/>
    <property type="project" value="UniProtKB"/>
</dbReference>
<dbReference type="GO" id="GO:0008610">
    <property type="term" value="P:lipid biosynthetic process"/>
    <property type="evidence" value="ECO:0000315"/>
    <property type="project" value="UniProtKB"/>
</dbReference>
<dbReference type="GO" id="GO:0030879">
    <property type="term" value="P:mammary gland development"/>
    <property type="evidence" value="ECO:0000315"/>
    <property type="project" value="MGI"/>
</dbReference>
<dbReference type="GO" id="GO:0006656">
    <property type="term" value="P:phosphatidylcholine biosynthetic process"/>
    <property type="evidence" value="ECO:0007669"/>
    <property type="project" value="Ensembl"/>
</dbReference>
<dbReference type="GO" id="GO:0040014">
    <property type="term" value="P:regulation of multicellular organism growth"/>
    <property type="evidence" value="ECO:0000315"/>
    <property type="project" value="MGI"/>
</dbReference>
<dbReference type="GO" id="GO:0019432">
    <property type="term" value="P:triglyceride biosynthetic process"/>
    <property type="evidence" value="ECO:0000315"/>
    <property type="project" value="UniProtKB"/>
</dbReference>
<dbReference type="GO" id="GO:0006641">
    <property type="term" value="P:triglyceride metabolic process"/>
    <property type="evidence" value="ECO:0000315"/>
    <property type="project" value="MGI"/>
</dbReference>
<dbReference type="CDD" id="cd07991">
    <property type="entry name" value="LPLAT_LPCAT1-like"/>
    <property type="match status" value="1"/>
</dbReference>
<dbReference type="InterPro" id="IPR045252">
    <property type="entry name" value="LPCAT1-like"/>
</dbReference>
<dbReference type="InterPro" id="IPR002123">
    <property type="entry name" value="Plipid/glycerol_acylTrfase"/>
</dbReference>
<dbReference type="PANTHER" id="PTHR23063:SF37">
    <property type="entry name" value="GLYCEROL-3-PHOSPHATE ACYLTRANSFERASE 4"/>
    <property type="match status" value="1"/>
</dbReference>
<dbReference type="PANTHER" id="PTHR23063">
    <property type="entry name" value="PHOSPHOLIPID ACYLTRANSFERASE"/>
    <property type="match status" value="1"/>
</dbReference>
<dbReference type="Pfam" id="PF01553">
    <property type="entry name" value="Acyltransferase"/>
    <property type="match status" value="1"/>
</dbReference>
<dbReference type="SMART" id="SM00563">
    <property type="entry name" value="PlsC"/>
    <property type="match status" value="1"/>
</dbReference>
<dbReference type="SUPFAM" id="SSF69593">
    <property type="entry name" value="Glycerol-3-phosphate (1)-acyltransferase"/>
    <property type="match status" value="1"/>
</dbReference>
<evidence type="ECO:0000250" key="1">
    <source>
        <dbReference type="UniProtKB" id="Q86UL3"/>
    </source>
</evidence>
<evidence type="ECO:0000250" key="2">
    <source>
        <dbReference type="UniProtKB" id="Q9D517"/>
    </source>
</evidence>
<evidence type="ECO:0000255" key="3"/>
<evidence type="ECO:0000269" key="4">
    <source>
    </source>
</evidence>
<evidence type="ECO:0000269" key="5">
    <source>
    </source>
</evidence>
<evidence type="ECO:0000303" key="6">
    <source>
    </source>
</evidence>
<evidence type="ECO:0000305" key="7"/>
<evidence type="ECO:0000305" key="8">
    <source>
    </source>
</evidence>
<evidence type="ECO:0000312" key="9">
    <source>
        <dbReference type="MGI" id="MGI:2142716"/>
    </source>
</evidence>
<organism>
    <name type="scientific">Mus musculus</name>
    <name type="common">Mouse</name>
    <dbReference type="NCBI Taxonomy" id="10090"/>
    <lineage>
        <taxon>Eukaryota</taxon>
        <taxon>Metazoa</taxon>
        <taxon>Chordata</taxon>
        <taxon>Craniata</taxon>
        <taxon>Vertebrata</taxon>
        <taxon>Euteleostomi</taxon>
        <taxon>Mammalia</taxon>
        <taxon>Eutheria</taxon>
        <taxon>Euarchontoglires</taxon>
        <taxon>Glires</taxon>
        <taxon>Rodentia</taxon>
        <taxon>Myomorpha</taxon>
        <taxon>Muroidea</taxon>
        <taxon>Muridae</taxon>
        <taxon>Murinae</taxon>
        <taxon>Mus</taxon>
        <taxon>Mus</taxon>
    </lineage>
</organism>